<gene>
    <name evidence="1" type="primary">NEC2</name>
    <name type="ordered locus">26</name>
</gene>
<keyword id="KW-1043">Host membrane</keyword>
<keyword id="KW-1048">Host nucleus</keyword>
<keyword id="KW-0426">Late protein</keyword>
<keyword id="KW-0472">Membrane</keyword>
<keyword id="KW-0597">Phosphoprotein</keyword>
<keyword id="KW-1185">Reference proteome</keyword>
<keyword id="KW-0812">Transmembrane</keyword>
<keyword id="KW-1133">Transmembrane helix</keyword>
<name>NEC2_EHV1B</name>
<sequence>MDSYNYRDFAVGGGLLQRIRLVVSGSLHCGESDATLNDPKHLPARCVFQFSGPDNNSVTFPIEYVLRLMKNWARSQCDPYIRIQNTGVSVLFQGFFFAPPNAPMASITSEHNNVILKSTHTTGLALSGIERVKRGGGLDLRPLQAMMQISCFTRMPVVQLSFRFMGPEDASRTQRLLERATSFGAMELHQKRTVDSCDRSNGIVSPREHRECRERQKRRPTPKRCASEVFASLASISSAFASERVKRRPVRIAAAILAFVFVAVILAIATKGRLF</sequence>
<organismHost>
    <name type="scientific">Equus caballus</name>
    <name type="common">Horse</name>
    <dbReference type="NCBI Taxonomy" id="9796"/>
</organismHost>
<comment type="function">
    <text evidence="1">Plays an essential role in virion nuclear egress, the first step of virion release from infected cell. Within the host nucleus, NEC1 interacts with the newly formed capsid through the vertexes and directs it to the inner nuclear membrane by associating with NEC2. Induces the budding of the capsid at the inner nuclear membrane as well as its envelopment into the perinuclear space. There, the NEC1/NEC2 complex promotes the fusion of the enveloped capsid with the outer nuclear membrane and the subsequent release of the viral capsid into the cytoplasm where it will reach the secondary budding sites in the host Golgi or trans-Golgi network.</text>
</comment>
<comment type="subunit">
    <text evidence="1">Forms a heterohexameric complex with NEC1.</text>
</comment>
<comment type="subcellular location">
    <subcellularLocation>
        <location evidence="1">Host nucleus inner membrane</location>
        <topology evidence="1">Single-pass membrane protein</topology>
    </subcellularLocation>
    <text evidence="1">Also localizes at the transient membrane of perinuclear virions.</text>
</comment>
<comment type="PTM">
    <text evidence="1">Phosphorylated.</text>
</comment>
<comment type="similarity">
    <text evidence="1">Belongs to the herpesviridae NEC2 protein family.</text>
</comment>
<dbReference type="EMBL" id="AY665713">
    <property type="protein sequence ID" value="AAT67283.1"/>
    <property type="molecule type" value="Genomic_DNA"/>
</dbReference>
<dbReference type="PIR" id="I36797">
    <property type="entry name" value="WZBEB8"/>
</dbReference>
<dbReference type="SMR" id="P28954"/>
<dbReference type="KEGG" id="vg:1487492"/>
<dbReference type="Proteomes" id="UP000001189">
    <property type="component" value="Segment"/>
</dbReference>
<dbReference type="GO" id="GO:0044201">
    <property type="term" value="C:host cell nuclear inner membrane"/>
    <property type="evidence" value="ECO:0007669"/>
    <property type="project" value="UniProtKB-SubCell"/>
</dbReference>
<dbReference type="GO" id="GO:0016020">
    <property type="term" value="C:membrane"/>
    <property type="evidence" value="ECO:0007669"/>
    <property type="project" value="UniProtKB-KW"/>
</dbReference>
<dbReference type="HAMAP" id="MF_04024">
    <property type="entry name" value="HSV_NEC2"/>
    <property type="match status" value="1"/>
</dbReference>
<dbReference type="InterPro" id="IPR007626">
    <property type="entry name" value="Herpesvirus_viron_egress-type"/>
</dbReference>
<dbReference type="Pfam" id="PF04541">
    <property type="entry name" value="Herpes_U34"/>
    <property type="match status" value="1"/>
</dbReference>
<feature type="chain" id="PRO_0000116027" description="Nuclear egress protein 2">
    <location>
        <begin position="1"/>
        <end position="275"/>
    </location>
</feature>
<feature type="topological domain" description="Perinuclear space" evidence="1">
    <location>
        <begin position="1"/>
        <end position="251"/>
    </location>
</feature>
<feature type="transmembrane region" description="Helical" evidence="1">
    <location>
        <begin position="252"/>
        <end position="272"/>
    </location>
</feature>
<feature type="topological domain" description="Nuclear" evidence="1">
    <location>
        <begin position="273"/>
        <end position="275"/>
    </location>
</feature>
<feature type="region of interest" description="Disordered" evidence="2">
    <location>
        <begin position="197"/>
        <end position="221"/>
    </location>
</feature>
<protein>
    <recommendedName>
        <fullName evidence="1">Nuclear egress protein 2</fullName>
    </recommendedName>
</protein>
<organism>
    <name type="scientific">Equine herpesvirus 1 (strain Ab4p)</name>
    <name type="common">EHV-1</name>
    <name type="synonym">Equine abortion virus</name>
    <dbReference type="NCBI Taxonomy" id="31520"/>
    <lineage>
        <taxon>Viruses</taxon>
        <taxon>Duplodnaviria</taxon>
        <taxon>Heunggongvirae</taxon>
        <taxon>Peploviricota</taxon>
        <taxon>Herviviricetes</taxon>
        <taxon>Herpesvirales</taxon>
        <taxon>Orthoherpesviridae</taxon>
        <taxon>Alphaherpesvirinae</taxon>
        <taxon>Varicellovirus</taxon>
        <taxon>Varicellovirus equidalpha1</taxon>
        <taxon>Equid alphaherpesvirus 1</taxon>
    </lineage>
</organism>
<proteinExistence type="inferred from homology"/>
<reference key="1">
    <citation type="journal article" date="1992" name="Virology">
        <title>The DNA sequence of equine herpesvirus-1.</title>
        <authorList>
            <person name="Telford E.A.R."/>
            <person name="Watson M.S."/>
            <person name="McBride K."/>
            <person name="Davison A.J."/>
        </authorList>
    </citation>
    <scope>NUCLEOTIDE SEQUENCE [LARGE SCALE GENOMIC DNA]</scope>
</reference>
<accession>P28954</accession>
<accession>Q6S6P5</accession>
<evidence type="ECO:0000255" key="1">
    <source>
        <dbReference type="HAMAP-Rule" id="MF_04024"/>
    </source>
</evidence>
<evidence type="ECO:0000256" key="2">
    <source>
        <dbReference type="SAM" id="MobiDB-lite"/>
    </source>
</evidence>